<organism>
    <name type="scientific">Mycobacterium sp. (strain MCS)</name>
    <dbReference type="NCBI Taxonomy" id="164756"/>
    <lineage>
        <taxon>Bacteria</taxon>
        <taxon>Bacillati</taxon>
        <taxon>Actinomycetota</taxon>
        <taxon>Actinomycetes</taxon>
        <taxon>Mycobacteriales</taxon>
        <taxon>Mycobacteriaceae</taxon>
        <taxon>Mycobacterium</taxon>
    </lineage>
</organism>
<sequence length="105" mass="11280">MKVHKGDTVLVVSGKDKGAKGKVIQAYPTRNKVLVEGVNRIKKHTAVSSNERGASSGGIVTQEAPIHVSNVMVVDSDGNPTRIGYRVDEETGKKVRVSKRNGKDI</sequence>
<proteinExistence type="inferred from homology"/>
<gene>
    <name evidence="1" type="primary">rplX</name>
    <name type="ordered locus">Mmcs_1026</name>
</gene>
<comment type="function">
    <text evidence="1">One of two assembly initiator proteins, it binds directly to the 5'-end of the 23S rRNA, where it nucleates assembly of the 50S subunit.</text>
</comment>
<comment type="function">
    <text evidence="1">One of the proteins that surrounds the polypeptide exit tunnel on the outside of the subunit.</text>
</comment>
<comment type="subunit">
    <text evidence="1">Part of the 50S ribosomal subunit.</text>
</comment>
<comment type="similarity">
    <text evidence="1">Belongs to the universal ribosomal protein uL24 family.</text>
</comment>
<keyword id="KW-0687">Ribonucleoprotein</keyword>
<keyword id="KW-0689">Ribosomal protein</keyword>
<keyword id="KW-0694">RNA-binding</keyword>
<keyword id="KW-0699">rRNA-binding</keyword>
<name>RL24_MYCSS</name>
<accession>Q1BD94</accession>
<dbReference type="EMBL" id="CP000384">
    <property type="protein sequence ID" value="ABG07140.1"/>
    <property type="molecule type" value="Genomic_DNA"/>
</dbReference>
<dbReference type="SMR" id="Q1BD94"/>
<dbReference type="KEGG" id="mmc:Mmcs_1026"/>
<dbReference type="HOGENOM" id="CLU_093315_2_0_11"/>
<dbReference type="BioCyc" id="MSP164756:G1G6O-1050-MONOMER"/>
<dbReference type="GO" id="GO:1990904">
    <property type="term" value="C:ribonucleoprotein complex"/>
    <property type="evidence" value="ECO:0007669"/>
    <property type="project" value="UniProtKB-KW"/>
</dbReference>
<dbReference type="GO" id="GO:0005840">
    <property type="term" value="C:ribosome"/>
    <property type="evidence" value="ECO:0007669"/>
    <property type="project" value="UniProtKB-KW"/>
</dbReference>
<dbReference type="GO" id="GO:0019843">
    <property type="term" value="F:rRNA binding"/>
    <property type="evidence" value="ECO:0007669"/>
    <property type="project" value="UniProtKB-UniRule"/>
</dbReference>
<dbReference type="GO" id="GO:0003735">
    <property type="term" value="F:structural constituent of ribosome"/>
    <property type="evidence" value="ECO:0007669"/>
    <property type="project" value="InterPro"/>
</dbReference>
<dbReference type="GO" id="GO:0006412">
    <property type="term" value="P:translation"/>
    <property type="evidence" value="ECO:0007669"/>
    <property type="project" value="UniProtKB-UniRule"/>
</dbReference>
<dbReference type="CDD" id="cd06089">
    <property type="entry name" value="KOW_RPL26"/>
    <property type="match status" value="1"/>
</dbReference>
<dbReference type="FunFam" id="2.30.30.30:FF:000004">
    <property type="entry name" value="50S ribosomal protein L24"/>
    <property type="match status" value="1"/>
</dbReference>
<dbReference type="Gene3D" id="2.30.30.30">
    <property type="match status" value="1"/>
</dbReference>
<dbReference type="HAMAP" id="MF_01326_B">
    <property type="entry name" value="Ribosomal_uL24_B"/>
    <property type="match status" value="1"/>
</dbReference>
<dbReference type="InterPro" id="IPR005824">
    <property type="entry name" value="KOW"/>
</dbReference>
<dbReference type="InterPro" id="IPR014722">
    <property type="entry name" value="Rib_uL2_dom2"/>
</dbReference>
<dbReference type="InterPro" id="IPR003256">
    <property type="entry name" value="Ribosomal_uL24"/>
</dbReference>
<dbReference type="InterPro" id="IPR005825">
    <property type="entry name" value="Ribosomal_uL24_CS"/>
</dbReference>
<dbReference type="InterPro" id="IPR041988">
    <property type="entry name" value="Ribosomal_uL24_KOW"/>
</dbReference>
<dbReference type="InterPro" id="IPR008991">
    <property type="entry name" value="Translation_prot_SH3-like_sf"/>
</dbReference>
<dbReference type="NCBIfam" id="TIGR01079">
    <property type="entry name" value="rplX_bact"/>
    <property type="match status" value="1"/>
</dbReference>
<dbReference type="PANTHER" id="PTHR12903">
    <property type="entry name" value="MITOCHONDRIAL RIBOSOMAL PROTEIN L24"/>
    <property type="match status" value="1"/>
</dbReference>
<dbReference type="Pfam" id="PF00467">
    <property type="entry name" value="KOW"/>
    <property type="match status" value="1"/>
</dbReference>
<dbReference type="Pfam" id="PF17136">
    <property type="entry name" value="ribosomal_L24"/>
    <property type="match status" value="1"/>
</dbReference>
<dbReference type="SMART" id="SM00739">
    <property type="entry name" value="KOW"/>
    <property type="match status" value="1"/>
</dbReference>
<dbReference type="SUPFAM" id="SSF50104">
    <property type="entry name" value="Translation proteins SH3-like domain"/>
    <property type="match status" value="1"/>
</dbReference>
<dbReference type="PROSITE" id="PS01108">
    <property type="entry name" value="RIBOSOMAL_L24"/>
    <property type="match status" value="1"/>
</dbReference>
<protein>
    <recommendedName>
        <fullName evidence="1">Large ribosomal subunit protein uL24</fullName>
    </recommendedName>
    <alternativeName>
        <fullName evidence="2">50S ribosomal protein L24</fullName>
    </alternativeName>
</protein>
<feature type="chain" id="PRO_1000052262" description="Large ribosomal subunit protein uL24">
    <location>
        <begin position="1"/>
        <end position="105"/>
    </location>
</feature>
<reference key="1">
    <citation type="submission" date="2006-06" db="EMBL/GenBank/DDBJ databases">
        <title>Complete sequence of chromosome of Mycobacterium sp. MCS.</title>
        <authorList>
            <consortium name="US DOE Joint Genome Institute"/>
            <person name="Copeland A."/>
            <person name="Lucas S."/>
            <person name="Lapidus A."/>
            <person name="Barry K."/>
            <person name="Detter J.C."/>
            <person name="Glavina del Rio T."/>
            <person name="Hammon N."/>
            <person name="Israni S."/>
            <person name="Dalin E."/>
            <person name="Tice H."/>
            <person name="Pitluck S."/>
            <person name="Martinez M."/>
            <person name="Schmutz J."/>
            <person name="Larimer F."/>
            <person name="Land M."/>
            <person name="Hauser L."/>
            <person name="Kyrpides N."/>
            <person name="Kim E."/>
            <person name="Miller C.D."/>
            <person name="Hughes J.E."/>
            <person name="Anderson A.J."/>
            <person name="Sims R.C."/>
            <person name="Richardson P."/>
        </authorList>
    </citation>
    <scope>NUCLEOTIDE SEQUENCE [LARGE SCALE GENOMIC DNA]</scope>
    <source>
        <strain>MCS</strain>
    </source>
</reference>
<evidence type="ECO:0000255" key="1">
    <source>
        <dbReference type="HAMAP-Rule" id="MF_01326"/>
    </source>
</evidence>
<evidence type="ECO:0000305" key="2"/>